<gene>
    <name evidence="4" type="primary">espF</name>
    <name type="ordered locus">Rv3865</name>
</gene>
<evidence type="ECO:0000269" key="1">
    <source>
    </source>
</evidence>
<evidence type="ECO:0000269" key="2">
    <source>
    </source>
</evidence>
<evidence type="ECO:0000269" key="3">
    <source>
    </source>
</evidence>
<evidence type="ECO:0000303" key="4">
    <source>
    </source>
</evidence>
<evidence type="ECO:0000305" key="5"/>
<evidence type="ECO:0007744" key="6">
    <source>
    </source>
</evidence>
<keyword id="KW-0007">Acetylation</keyword>
<keyword id="KW-1185">Reference proteome</keyword>
<sequence>MTGFLGVVPSFLKVLAGMHNEIVGDIKRATDTVAGISGRVQLTHGSFTSKFNDTLQEFETTRSSTGTGLQGVTSGLANNLLAAAGAYLKADDGLAGVIDKIFG</sequence>
<accession>P9WJD1</accession>
<accession>L0TE06</accession>
<accession>P96212</accession>
<accession>Q7D4P8</accession>
<name>ESPF_MYCTU</name>
<organism>
    <name type="scientific">Mycobacterium tuberculosis (strain ATCC 25618 / H37Rv)</name>
    <dbReference type="NCBI Taxonomy" id="83332"/>
    <lineage>
        <taxon>Bacteria</taxon>
        <taxon>Bacillati</taxon>
        <taxon>Actinomycetota</taxon>
        <taxon>Actinomycetes</taxon>
        <taxon>Mycobacteriales</taxon>
        <taxon>Mycobacteriaceae</taxon>
        <taxon>Mycobacterium</taxon>
        <taxon>Mycobacterium tuberculosis complex</taxon>
    </lineage>
</organism>
<feature type="initiator methionine" description="Removed" evidence="6">
    <location>
        <position position="1"/>
    </location>
</feature>
<feature type="chain" id="PRO_0000393951" description="ESX-1 secretion-associated protein EspF">
    <location>
        <begin position="2"/>
        <end position="103"/>
    </location>
</feature>
<feature type="modified residue" description="N-acetylthreonine" evidence="6">
    <location>
        <position position="2"/>
    </location>
</feature>
<protein>
    <recommendedName>
        <fullName evidence="5">ESX-1 secretion-associated protein EspF</fullName>
    </recommendedName>
</protein>
<dbReference type="EMBL" id="AL123456">
    <property type="protein sequence ID" value="CCP46694.1"/>
    <property type="molecule type" value="Genomic_DNA"/>
</dbReference>
<dbReference type="PIR" id="F70656">
    <property type="entry name" value="F70656"/>
</dbReference>
<dbReference type="RefSeq" id="NP_218382.1">
    <property type="nucleotide sequence ID" value="NC_000962.3"/>
</dbReference>
<dbReference type="RefSeq" id="WP_003899737.1">
    <property type="nucleotide sequence ID" value="NZ_NVQJ01000074.1"/>
</dbReference>
<dbReference type="SMR" id="P9WJD1"/>
<dbReference type="STRING" id="83332.Rv3865"/>
<dbReference type="iPTMnet" id="P9WJD1"/>
<dbReference type="PaxDb" id="83332-Rv3865"/>
<dbReference type="DNASU" id="886172"/>
<dbReference type="GeneID" id="45427869"/>
<dbReference type="GeneID" id="886172"/>
<dbReference type="KEGG" id="mtu:Rv3865"/>
<dbReference type="KEGG" id="mtv:RVBD_3865"/>
<dbReference type="TubercuList" id="Rv3865"/>
<dbReference type="eggNOG" id="ENOG50316IZ">
    <property type="taxonomic scope" value="Bacteria"/>
</dbReference>
<dbReference type="InParanoid" id="P9WJD1"/>
<dbReference type="OrthoDB" id="4731902at2"/>
<dbReference type="Proteomes" id="UP000001584">
    <property type="component" value="Chromosome"/>
</dbReference>
<dbReference type="GO" id="GO:0009274">
    <property type="term" value="C:peptidoglycan-based cell wall"/>
    <property type="evidence" value="ECO:0007005"/>
    <property type="project" value="MTBBASE"/>
</dbReference>
<dbReference type="InterPro" id="IPR022536">
    <property type="entry name" value="EspC"/>
</dbReference>
<dbReference type="Pfam" id="PF10824">
    <property type="entry name" value="T7SS_ESX_EspC"/>
    <property type="match status" value="1"/>
</dbReference>
<reference key="1">
    <citation type="journal article" date="1998" name="Nature">
        <title>Deciphering the biology of Mycobacterium tuberculosis from the complete genome sequence.</title>
        <authorList>
            <person name="Cole S.T."/>
            <person name="Brosch R."/>
            <person name="Parkhill J."/>
            <person name="Garnier T."/>
            <person name="Churcher C.M."/>
            <person name="Harris D.E."/>
            <person name="Gordon S.V."/>
            <person name="Eiglmeier K."/>
            <person name="Gas S."/>
            <person name="Barry C.E. III"/>
            <person name="Tekaia F."/>
            <person name="Badcock K."/>
            <person name="Basham D."/>
            <person name="Brown D."/>
            <person name="Chillingworth T."/>
            <person name="Connor R."/>
            <person name="Davies R.M."/>
            <person name="Devlin K."/>
            <person name="Feltwell T."/>
            <person name="Gentles S."/>
            <person name="Hamlin N."/>
            <person name="Holroyd S."/>
            <person name="Hornsby T."/>
            <person name="Jagels K."/>
            <person name="Krogh A."/>
            <person name="McLean J."/>
            <person name="Moule S."/>
            <person name="Murphy L.D."/>
            <person name="Oliver S."/>
            <person name="Osborne J."/>
            <person name="Quail M.A."/>
            <person name="Rajandream M.A."/>
            <person name="Rogers J."/>
            <person name="Rutter S."/>
            <person name="Seeger K."/>
            <person name="Skelton S."/>
            <person name="Squares S."/>
            <person name="Squares R."/>
            <person name="Sulston J.E."/>
            <person name="Taylor K."/>
            <person name="Whitehead S."/>
            <person name="Barrell B.G."/>
        </authorList>
    </citation>
    <scope>NUCLEOTIDE SEQUENCE [LARGE SCALE GENOMIC DNA]</scope>
    <source>
        <strain>ATCC 25618 / H37Rv</strain>
    </source>
</reference>
<reference key="2">
    <citation type="journal article" date="2006" name="Infect. Immun.">
        <title>Dissection of ESAT-6 system 1 of Mycobacterium tuberculosis and impact on immunogenicity and virulence.</title>
        <authorList>
            <person name="Brodin P."/>
            <person name="Majlessi L."/>
            <person name="Marsollier L."/>
            <person name="de Jonge M.I."/>
            <person name="Bottai D."/>
            <person name="Demangel C."/>
            <person name="Hinds J."/>
            <person name="Neyrolles O."/>
            <person name="Butcher P.D."/>
            <person name="Leclerc C."/>
            <person name="Cole S.T."/>
            <person name="Brosch R."/>
        </authorList>
    </citation>
    <scope>DISRUPTION PHENOTYPE</scope>
</reference>
<reference key="3">
    <citation type="journal article" date="2009" name="Mol. Microbiol.">
        <title>ESX-1 secreted virulence factors are recognized by multiple cytosolic AAA ATPases in pathogenic mycobacteria.</title>
        <authorList>
            <person name="DiGiuseppe Champion P.A."/>
            <person name="Champion M.M."/>
            <person name="Manzanillo P."/>
            <person name="Cox J.S."/>
        </authorList>
    </citation>
    <scope>INTERACTION WITH ESXA; ECCA1 AND ESPC</scope>
</reference>
<reference key="4">
    <citation type="journal article" date="2011" name="J. Infect. Dis.">
        <title>ESAT-6 secretion-independent impact of ESX-1 genes espF and espG1 on virulence of Mycobacterium tuberculosis.</title>
        <authorList>
            <person name="Bottai D."/>
            <person name="Majlessi L."/>
            <person name="Simeone R."/>
            <person name="Frigui W."/>
            <person name="Laurent C."/>
            <person name="Lenormand P."/>
            <person name="Chen J."/>
            <person name="Rosenkrands I."/>
            <person name="Huerre M."/>
            <person name="Leclerc C."/>
            <person name="Cole S.T."/>
            <person name="Brosch R."/>
        </authorList>
    </citation>
    <scope>DISRUPTION PHENOTYPE</scope>
</reference>
<reference key="5">
    <citation type="journal article" date="2011" name="Mol. Cell. Proteomics">
        <title>Proteogenomic analysis of Mycobacterium tuberculosis by high resolution mass spectrometry.</title>
        <authorList>
            <person name="Kelkar D.S."/>
            <person name="Kumar D."/>
            <person name="Kumar P."/>
            <person name="Balakrishnan L."/>
            <person name="Muthusamy B."/>
            <person name="Yadav A.K."/>
            <person name="Shrivastava P."/>
            <person name="Marimuthu A."/>
            <person name="Anand S."/>
            <person name="Sundaram H."/>
            <person name="Kingsbury R."/>
            <person name="Harsha H.C."/>
            <person name="Nair B."/>
            <person name="Prasad T.S."/>
            <person name="Chauhan D.S."/>
            <person name="Katoch K."/>
            <person name="Katoch V.M."/>
            <person name="Kumar P."/>
            <person name="Chaerkady R."/>
            <person name="Ramachandran S."/>
            <person name="Dash D."/>
            <person name="Pandey A."/>
        </authorList>
    </citation>
    <scope>ACETYLATION [LARGE SCALE ANALYSIS] AT THR-2</scope>
    <scope>CLEAVAGE OF INITIATOR METHIONINE [LARGE SCALE ANALYSIS]</scope>
    <scope>IDENTIFICATION BY MASS SPECTROMETRY [LARGE SCALE ANALYSIS]</scope>
    <source>
        <strain>ATCC 25618 / H37Rv</strain>
    </source>
</reference>
<proteinExistence type="evidence at protein level"/>
<comment type="subunit">
    <text evidence="2">Interacts with EsxA, EccA1, and EspC.</text>
</comment>
<comment type="disruption phenotype">
    <text evidence="1 3">Inactivation leads to the attenuation of the recombinant strain, in spite of strong EsxA (ESAT-6) secretion and generation of specific T-cell responses. Mutant has lower amounts of PPE68.</text>
</comment>
<comment type="similarity">
    <text evidence="5">Belongs to the EspC family.</text>
</comment>